<comment type="function">
    <text evidence="2">Component of the 26S proteasome, a multiprotein complex involved in the ATP-dependent degradation of ubiquitinated proteins. This complex plays a key role in the maintenance of protein homeostasis by removing misfolded or damaged proteins, which could impair cellular functions, and by removing proteins whose functions are no longer required. Therefore, the proteasome participates in numerous cellular processes, including cell cycle progression, apoptosis, or DNA damage repair. PSMC6 belongs to the heterohexameric ring of AAA (ATPases associated with diverse cellular activities) proteins that unfolds ubiquitinated target proteins that are concurrently translocated into a proteolytic chamber and degraded into peptides.</text>
</comment>
<comment type="subunit">
    <text evidence="2">Component of the 19S proteasome regulatory particle complex. The 26S proteasome consists of a 20S core particle (CP) and two 19S regulatory subunits (RP). The regulatory particle is made of a lid composed of 9 subunits, a base containing 6 ATPases including PSMC6 and few additional components. Interacts with PAAF1.</text>
</comment>
<comment type="subcellular location">
    <subcellularLocation>
        <location evidence="1">Cytoplasm</location>
    </subcellularLocation>
    <subcellularLocation>
        <location evidence="1">Nucleus</location>
    </subcellularLocation>
</comment>
<comment type="similarity">
    <text evidence="4">Belongs to the AAA ATPase family.</text>
</comment>
<dbReference type="EMBL" id="BC112482">
    <property type="protein sequence ID" value="AAI12483.1"/>
    <property type="molecule type" value="mRNA"/>
</dbReference>
<dbReference type="RefSeq" id="NP_001039705.1">
    <property type="nucleotide sequence ID" value="NM_001046240.2"/>
</dbReference>
<dbReference type="SMR" id="Q2KIW6"/>
<dbReference type="CORUM" id="Q2KIW6"/>
<dbReference type="FunCoup" id="Q2KIW6">
    <property type="interactions" value="2610"/>
</dbReference>
<dbReference type="IntAct" id="Q2KIW6">
    <property type="interactions" value="9"/>
</dbReference>
<dbReference type="STRING" id="9913.ENSBTAP00000020886"/>
<dbReference type="PaxDb" id="9913-ENSBTAP00000020886"/>
<dbReference type="PeptideAtlas" id="Q2KIW6"/>
<dbReference type="GeneID" id="518637"/>
<dbReference type="KEGG" id="bta:518637"/>
<dbReference type="CTD" id="5706"/>
<dbReference type="eggNOG" id="KOG0651">
    <property type="taxonomic scope" value="Eukaryota"/>
</dbReference>
<dbReference type="InParanoid" id="Q2KIW6"/>
<dbReference type="OrthoDB" id="1937997at2759"/>
<dbReference type="Proteomes" id="UP000009136">
    <property type="component" value="Unplaced"/>
</dbReference>
<dbReference type="GO" id="GO:0005829">
    <property type="term" value="C:cytosol"/>
    <property type="evidence" value="ECO:0000304"/>
    <property type="project" value="Reactome"/>
</dbReference>
<dbReference type="GO" id="GO:0005634">
    <property type="term" value="C:nucleus"/>
    <property type="evidence" value="ECO:0007669"/>
    <property type="project" value="UniProtKB-SubCell"/>
</dbReference>
<dbReference type="GO" id="GO:0022624">
    <property type="term" value="C:proteasome accessory complex"/>
    <property type="evidence" value="ECO:0000250"/>
    <property type="project" value="UniProtKB"/>
</dbReference>
<dbReference type="GO" id="GO:0008540">
    <property type="term" value="C:proteasome regulatory particle, base subcomplex"/>
    <property type="evidence" value="ECO:0000318"/>
    <property type="project" value="GO_Central"/>
</dbReference>
<dbReference type="GO" id="GO:0005524">
    <property type="term" value="F:ATP binding"/>
    <property type="evidence" value="ECO:0007669"/>
    <property type="project" value="UniProtKB-KW"/>
</dbReference>
<dbReference type="GO" id="GO:0016887">
    <property type="term" value="F:ATP hydrolysis activity"/>
    <property type="evidence" value="ECO:0007669"/>
    <property type="project" value="InterPro"/>
</dbReference>
<dbReference type="GO" id="GO:0036402">
    <property type="term" value="F:proteasome-activating activity"/>
    <property type="evidence" value="ECO:0000318"/>
    <property type="project" value="GO_Central"/>
</dbReference>
<dbReference type="GO" id="GO:0036503">
    <property type="term" value="P:ERAD pathway"/>
    <property type="evidence" value="ECO:0000318"/>
    <property type="project" value="GO_Central"/>
</dbReference>
<dbReference type="GO" id="GO:0045899">
    <property type="term" value="P:positive regulation of RNA polymerase II transcription preinitiation complex assembly"/>
    <property type="evidence" value="ECO:0000318"/>
    <property type="project" value="GO_Central"/>
</dbReference>
<dbReference type="GO" id="GO:0043161">
    <property type="term" value="P:proteasome-mediated ubiquitin-dependent protein catabolic process"/>
    <property type="evidence" value="ECO:0000318"/>
    <property type="project" value="GO_Central"/>
</dbReference>
<dbReference type="CDD" id="cd19502">
    <property type="entry name" value="RecA-like_PAN_like"/>
    <property type="match status" value="1"/>
</dbReference>
<dbReference type="FunFam" id="1.10.8.60:FF:000008">
    <property type="entry name" value="26S protease regulatory subunit 10B"/>
    <property type="match status" value="1"/>
</dbReference>
<dbReference type="FunFam" id="2.40.50.140:FF:000027">
    <property type="entry name" value="26S protease regulatory subunit 10B"/>
    <property type="match status" value="1"/>
</dbReference>
<dbReference type="FunFam" id="3.40.50.300:FF:000034">
    <property type="entry name" value="26S protease regulatory subunit 10B"/>
    <property type="match status" value="1"/>
</dbReference>
<dbReference type="Gene3D" id="1.10.8.60">
    <property type="match status" value="1"/>
</dbReference>
<dbReference type="Gene3D" id="2.40.50.140">
    <property type="entry name" value="Nucleic acid-binding proteins"/>
    <property type="match status" value="1"/>
</dbReference>
<dbReference type="Gene3D" id="3.40.50.300">
    <property type="entry name" value="P-loop containing nucleotide triphosphate hydrolases"/>
    <property type="match status" value="1"/>
</dbReference>
<dbReference type="InterPro" id="IPR050221">
    <property type="entry name" value="26S_Proteasome_ATPase"/>
</dbReference>
<dbReference type="InterPro" id="IPR003593">
    <property type="entry name" value="AAA+_ATPase"/>
</dbReference>
<dbReference type="InterPro" id="IPR041569">
    <property type="entry name" value="AAA_lid_3"/>
</dbReference>
<dbReference type="InterPro" id="IPR003959">
    <property type="entry name" value="ATPase_AAA_core"/>
</dbReference>
<dbReference type="InterPro" id="IPR003960">
    <property type="entry name" value="ATPase_AAA_CS"/>
</dbReference>
<dbReference type="InterPro" id="IPR012340">
    <property type="entry name" value="NA-bd_OB-fold"/>
</dbReference>
<dbReference type="InterPro" id="IPR027417">
    <property type="entry name" value="P-loop_NTPase"/>
</dbReference>
<dbReference type="InterPro" id="IPR032501">
    <property type="entry name" value="Prot_ATP_ID_OB_2nd"/>
</dbReference>
<dbReference type="PANTHER" id="PTHR23073">
    <property type="entry name" value="26S PROTEASOME REGULATORY SUBUNIT"/>
    <property type="match status" value="1"/>
</dbReference>
<dbReference type="Pfam" id="PF00004">
    <property type="entry name" value="AAA"/>
    <property type="match status" value="1"/>
</dbReference>
<dbReference type="Pfam" id="PF17862">
    <property type="entry name" value="AAA_lid_3"/>
    <property type="match status" value="1"/>
</dbReference>
<dbReference type="Pfam" id="PF16450">
    <property type="entry name" value="Prot_ATP_ID_OB_C"/>
    <property type="match status" value="1"/>
</dbReference>
<dbReference type="SMART" id="SM00382">
    <property type="entry name" value="AAA"/>
    <property type="match status" value="1"/>
</dbReference>
<dbReference type="SUPFAM" id="SSF52540">
    <property type="entry name" value="P-loop containing nucleoside triphosphate hydrolases"/>
    <property type="match status" value="1"/>
</dbReference>
<dbReference type="PROSITE" id="PS00674">
    <property type="entry name" value="AAA"/>
    <property type="match status" value="1"/>
</dbReference>
<sequence>MADPRDKALQDYRKKLLEHKEIDGRLKELREQLKELTKQYEKSENDLKALQSVGQIVGEVLKQLTEEKFIVKATNGPRYVVGCRRQLDKSKLKPGTRVALDMTTLTIMRYLPREVDPLVYNMSHEDPGNVSYSEIGGLSEQIRELREVIELPLTNPELFQRVGIIPPKGCLLYGPPGTGKTLLARAVASQLDCNFLKVVSSSIVDKYIGESARLIREMFNYARDHQPCIIFMDEIDAIGGRRFSEGTSADREIQRTLMELLNQMDGFDTLHRVKMIMATNRPDTLDPALLRPGRLDRKIHIDLPNEQARLDILKIHAGPITKHGEIDYEAIVKLSDGFNGADLGNVCTEAGMFAIRADHDFVVQEDFMKAVRKVADSKKLESKLDYKPV</sequence>
<feature type="chain" id="PRO_0000263085" description="26S proteasome regulatory subunit 10B">
    <location>
        <begin position="1"/>
        <end position="389"/>
    </location>
</feature>
<feature type="binding site" evidence="3">
    <location>
        <begin position="174"/>
        <end position="181"/>
    </location>
    <ligand>
        <name>ATP</name>
        <dbReference type="ChEBI" id="CHEBI:30616"/>
    </ligand>
</feature>
<feature type="modified residue" description="N6-acetyllysine" evidence="2">
    <location>
        <position position="72"/>
    </location>
</feature>
<feature type="modified residue" description="N6-acetyllysine" evidence="2">
    <location>
        <position position="206"/>
    </location>
</feature>
<feature type="modified residue" description="Phosphoserine" evidence="2">
    <location>
        <position position="244"/>
    </location>
</feature>
<reference key="1">
    <citation type="submission" date="2006-01" db="EMBL/GenBank/DDBJ databases">
        <authorList>
            <consortium name="NIH - Mammalian Gene Collection (MGC) project"/>
        </authorList>
    </citation>
    <scope>NUCLEOTIDE SEQUENCE [LARGE SCALE MRNA]</scope>
    <source>
        <strain>Hereford</strain>
        <tissue>Testis</tissue>
    </source>
</reference>
<evidence type="ECO:0000250" key="1"/>
<evidence type="ECO:0000250" key="2">
    <source>
        <dbReference type="UniProtKB" id="P62333"/>
    </source>
</evidence>
<evidence type="ECO:0000255" key="3"/>
<evidence type="ECO:0000305" key="4"/>
<proteinExistence type="evidence at transcript level"/>
<keyword id="KW-0007">Acetylation</keyword>
<keyword id="KW-0067">ATP-binding</keyword>
<keyword id="KW-0963">Cytoplasm</keyword>
<keyword id="KW-0547">Nucleotide-binding</keyword>
<keyword id="KW-0539">Nucleus</keyword>
<keyword id="KW-0597">Phosphoprotein</keyword>
<keyword id="KW-0647">Proteasome</keyword>
<keyword id="KW-1185">Reference proteome</keyword>
<organism>
    <name type="scientific">Bos taurus</name>
    <name type="common">Bovine</name>
    <dbReference type="NCBI Taxonomy" id="9913"/>
    <lineage>
        <taxon>Eukaryota</taxon>
        <taxon>Metazoa</taxon>
        <taxon>Chordata</taxon>
        <taxon>Craniata</taxon>
        <taxon>Vertebrata</taxon>
        <taxon>Euteleostomi</taxon>
        <taxon>Mammalia</taxon>
        <taxon>Eutheria</taxon>
        <taxon>Laurasiatheria</taxon>
        <taxon>Artiodactyla</taxon>
        <taxon>Ruminantia</taxon>
        <taxon>Pecora</taxon>
        <taxon>Bovidae</taxon>
        <taxon>Bovinae</taxon>
        <taxon>Bos</taxon>
    </lineage>
</organism>
<name>PRS10_BOVIN</name>
<gene>
    <name type="primary">PSMC6</name>
</gene>
<protein>
    <recommendedName>
        <fullName>26S proteasome regulatory subunit 10B</fullName>
    </recommendedName>
    <alternativeName>
        <fullName>26S proteasome AAA-ATPase subunit RPT4</fullName>
    </alternativeName>
    <alternativeName>
        <fullName>Proteasome 26S subunit ATPase 6</fullName>
    </alternativeName>
</protein>
<accession>Q2KIW6</accession>